<gene>
    <name evidence="1" type="primary">rplQ</name>
    <name type="ordered locus">Xfasm12_0519</name>
</gene>
<comment type="subunit">
    <text evidence="1">Part of the 50S ribosomal subunit. Contacts protein L32.</text>
</comment>
<comment type="similarity">
    <text evidence="1">Belongs to the bacterial ribosomal protein bL17 family.</text>
</comment>
<protein>
    <recommendedName>
        <fullName evidence="1">Large ribosomal subunit protein bL17</fullName>
    </recommendedName>
    <alternativeName>
        <fullName evidence="2">50S ribosomal protein L17</fullName>
    </alternativeName>
</protein>
<proteinExistence type="inferred from homology"/>
<dbReference type="EMBL" id="CP000941">
    <property type="protein sequence ID" value="ACA11528.1"/>
    <property type="molecule type" value="Genomic_DNA"/>
</dbReference>
<dbReference type="RefSeq" id="WP_004086546.1">
    <property type="nucleotide sequence ID" value="NC_010513.1"/>
</dbReference>
<dbReference type="SMR" id="B0U5M4"/>
<dbReference type="KEGG" id="xfm:Xfasm12_0519"/>
<dbReference type="HOGENOM" id="CLU_074407_2_0_6"/>
<dbReference type="GO" id="GO:0022625">
    <property type="term" value="C:cytosolic large ribosomal subunit"/>
    <property type="evidence" value="ECO:0007669"/>
    <property type="project" value="TreeGrafter"/>
</dbReference>
<dbReference type="GO" id="GO:0003735">
    <property type="term" value="F:structural constituent of ribosome"/>
    <property type="evidence" value="ECO:0007669"/>
    <property type="project" value="InterPro"/>
</dbReference>
<dbReference type="GO" id="GO:0006412">
    <property type="term" value="P:translation"/>
    <property type="evidence" value="ECO:0007669"/>
    <property type="project" value="UniProtKB-UniRule"/>
</dbReference>
<dbReference type="FunFam" id="3.90.1030.10:FF:000001">
    <property type="entry name" value="50S ribosomal protein L17"/>
    <property type="match status" value="1"/>
</dbReference>
<dbReference type="Gene3D" id="3.90.1030.10">
    <property type="entry name" value="Ribosomal protein L17"/>
    <property type="match status" value="1"/>
</dbReference>
<dbReference type="HAMAP" id="MF_01368">
    <property type="entry name" value="Ribosomal_bL17"/>
    <property type="match status" value="1"/>
</dbReference>
<dbReference type="InterPro" id="IPR000456">
    <property type="entry name" value="Ribosomal_bL17"/>
</dbReference>
<dbReference type="InterPro" id="IPR047859">
    <property type="entry name" value="Ribosomal_bL17_CS"/>
</dbReference>
<dbReference type="InterPro" id="IPR036373">
    <property type="entry name" value="Ribosomal_bL17_sf"/>
</dbReference>
<dbReference type="NCBIfam" id="TIGR00059">
    <property type="entry name" value="L17"/>
    <property type="match status" value="1"/>
</dbReference>
<dbReference type="PANTHER" id="PTHR14413:SF16">
    <property type="entry name" value="LARGE RIBOSOMAL SUBUNIT PROTEIN BL17M"/>
    <property type="match status" value="1"/>
</dbReference>
<dbReference type="PANTHER" id="PTHR14413">
    <property type="entry name" value="RIBOSOMAL PROTEIN L17"/>
    <property type="match status" value="1"/>
</dbReference>
<dbReference type="Pfam" id="PF01196">
    <property type="entry name" value="Ribosomal_L17"/>
    <property type="match status" value="1"/>
</dbReference>
<dbReference type="SUPFAM" id="SSF64263">
    <property type="entry name" value="Prokaryotic ribosomal protein L17"/>
    <property type="match status" value="1"/>
</dbReference>
<dbReference type="PROSITE" id="PS01167">
    <property type="entry name" value="RIBOSOMAL_L17"/>
    <property type="match status" value="1"/>
</dbReference>
<sequence length="126" mass="14373">MRHQKSGRKFNRTDAHRGAMFSNMVASLFKYQLIKTTLPKAKELRRVAEPLITLAKVDSVANRRLAFARLRNKEAVGILFSNLGPRYITRPGGYIRLLKCGFRHGDNAPMAYVEMLERPIIAEEVT</sequence>
<reference key="1">
    <citation type="journal article" date="2010" name="J. Bacteriol.">
        <title>Whole genome sequences of two Xylella fastidiosa strains (M12 and M23) causing almond leaf scorch disease in California.</title>
        <authorList>
            <person name="Chen J."/>
            <person name="Xie G."/>
            <person name="Han S."/>
            <person name="Chertkov O."/>
            <person name="Sims D."/>
            <person name="Civerolo E.L."/>
        </authorList>
    </citation>
    <scope>NUCLEOTIDE SEQUENCE [LARGE SCALE GENOMIC DNA]</scope>
    <source>
        <strain>M12</strain>
    </source>
</reference>
<accession>B0U5M4</accession>
<keyword id="KW-0687">Ribonucleoprotein</keyword>
<keyword id="KW-0689">Ribosomal protein</keyword>
<feature type="chain" id="PRO_1000144510" description="Large ribosomal subunit protein bL17">
    <location>
        <begin position="1"/>
        <end position="126"/>
    </location>
</feature>
<name>RL17_XYLFM</name>
<organism>
    <name type="scientific">Xylella fastidiosa (strain M12)</name>
    <dbReference type="NCBI Taxonomy" id="405440"/>
    <lineage>
        <taxon>Bacteria</taxon>
        <taxon>Pseudomonadati</taxon>
        <taxon>Pseudomonadota</taxon>
        <taxon>Gammaproteobacteria</taxon>
        <taxon>Lysobacterales</taxon>
        <taxon>Lysobacteraceae</taxon>
        <taxon>Xylella</taxon>
    </lineage>
</organism>
<evidence type="ECO:0000255" key="1">
    <source>
        <dbReference type="HAMAP-Rule" id="MF_01368"/>
    </source>
</evidence>
<evidence type="ECO:0000305" key="2"/>